<accession>E3GC98</accession>
<comment type="subcellular location">
    <subcellularLocation>
        <location evidence="1">Cell inner membrane</location>
        <topology evidence="1">Multi-pass membrane protein</topology>
    </subcellularLocation>
</comment>
<comment type="similarity">
    <text evidence="1">Belongs to the major facilitator superfamily. DHA1 family. MdtG (TC 2.A.1.2.20) subfamily.</text>
</comment>
<keyword id="KW-0997">Cell inner membrane</keyword>
<keyword id="KW-1003">Cell membrane</keyword>
<keyword id="KW-0472">Membrane</keyword>
<keyword id="KW-1185">Reference proteome</keyword>
<keyword id="KW-0812">Transmembrane</keyword>
<keyword id="KW-1133">Transmembrane helix</keyword>
<keyword id="KW-0813">Transport</keyword>
<gene>
    <name evidence="1" type="primary">mdtG</name>
    <name type="ordered locus">Entcl_2736</name>
</gene>
<feature type="chain" id="PRO_0000414578" description="Multidrug resistance protein MdtG">
    <location>
        <begin position="1"/>
        <end position="418"/>
    </location>
</feature>
<feature type="transmembrane region" description="Helical" evidence="1">
    <location>
        <begin position="19"/>
        <end position="39"/>
    </location>
</feature>
<feature type="transmembrane region" description="Helical" evidence="1">
    <location>
        <begin position="56"/>
        <end position="76"/>
    </location>
</feature>
<feature type="transmembrane region" description="Helical" evidence="1">
    <location>
        <begin position="90"/>
        <end position="110"/>
    </location>
</feature>
<feature type="transmembrane region" description="Helical" evidence="1">
    <location>
        <begin position="113"/>
        <end position="133"/>
    </location>
</feature>
<feature type="transmembrane region" description="Helical" evidence="1">
    <location>
        <begin position="144"/>
        <end position="164"/>
    </location>
</feature>
<feature type="transmembrane region" description="Helical" evidence="1">
    <location>
        <begin position="171"/>
        <end position="191"/>
    </location>
</feature>
<feature type="transmembrane region" description="Helical" evidence="1">
    <location>
        <begin position="222"/>
        <end position="242"/>
    </location>
</feature>
<feature type="transmembrane region" description="Helical" evidence="1">
    <location>
        <begin position="251"/>
        <end position="271"/>
    </location>
</feature>
<feature type="transmembrane region" description="Helical" evidence="1">
    <location>
        <begin position="288"/>
        <end position="308"/>
    </location>
</feature>
<feature type="transmembrane region" description="Helical" evidence="1">
    <location>
        <begin position="317"/>
        <end position="337"/>
    </location>
</feature>
<feature type="transmembrane region" description="Helical" evidence="1">
    <location>
        <begin position="376"/>
        <end position="396"/>
    </location>
</feature>
<dbReference type="EMBL" id="CP002272">
    <property type="protein sequence ID" value="ADO48984.1"/>
    <property type="molecule type" value="Genomic_DNA"/>
</dbReference>
<dbReference type="RefSeq" id="WP_013366717.1">
    <property type="nucleotide sequence ID" value="NC_014618.1"/>
</dbReference>
<dbReference type="SMR" id="E3GC98"/>
<dbReference type="STRING" id="701347.Entcl_2736"/>
<dbReference type="KEGG" id="esc:Entcl_2736"/>
<dbReference type="eggNOG" id="COG2814">
    <property type="taxonomic scope" value="Bacteria"/>
</dbReference>
<dbReference type="HOGENOM" id="CLU_001265_57_3_6"/>
<dbReference type="Proteomes" id="UP000006872">
    <property type="component" value="Chromosome"/>
</dbReference>
<dbReference type="GO" id="GO:0005886">
    <property type="term" value="C:plasma membrane"/>
    <property type="evidence" value="ECO:0007669"/>
    <property type="project" value="UniProtKB-SubCell"/>
</dbReference>
<dbReference type="GO" id="GO:0022857">
    <property type="term" value="F:transmembrane transporter activity"/>
    <property type="evidence" value="ECO:0007669"/>
    <property type="project" value="UniProtKB-UniRule"/>
</dbReference>
<dbReference type="CDD" id="cd17391">
    <property type="entry name" value="MFS_MdtG_MDR_like"/>
    <property type="match status" value="1"/>
</dbReference>
<dbReference type="FunFam" id="1.20.1250.20:FF:000020">
    <property type="entry name" value="Multidrug resistance protein MdtG"/>
    <property type="match status" value="1"/>
</dbReference>
<dbReference type="FunFam" id="1.20.1250.20:FF:000022">
    <property type="entry name" value="Multidrug resistance protein MdtG"/>
    <property type="match status" value="1"/>
</dbReference>
<dbReference type="Gene3D" id="1.20.1250.20">
    <property type="entry name" value="MFS general substrate transporter like domains"/>
    <property type="match status" value="2"/>
</dbReference>
<dbReference type="HAMAP" id="MF_01528">
    <property type="entry name" value="MFS_MdtG"/>
    <property type="match status" value="1"/>
</dbReference>
<dbReference type="InterPro" id="IPR011701">
    <property type="entry name" value="MFS"/>
</dbReference>
<dbReference type="InterPro" id="IPR020846">
    <property type="entry name" value="MFS_dom"/>
</dbReference>
<dbReference type="InterPro" id="IPR050497">
    <property type="entry name" value="MFS_MdtG_subfamily"/>
</dbReference>
<dbReference type="InterPro" id="IPR036259">
    <property type="entry name" value="MFS_trans_sf"/>
</dbReference>
<dbReference type="InterPro" id="IPR023692">
    <property type="entry name" value="Mutidrug-R_MdtG"/>
</dbReference>
<dbReference type="InterPro" id="IPR001958">
    <property type="entry name" value="Tet-R_TetA/multi-R_MdtG-like"/>
</dbReference>
<dbReference type="NCBIfam" id="NF007372">
    <property type="entry name" value="PRK09874.1"/>
    <property type="match status" value="1"/>
</dbReference>
<dbReference type="PANTHER" id="PTHR43414">
    <property type="entry name" value="MULTIDRUG RESISTANCE PROTEIN MDTG"/>
    <property type="match status" value="1"/>
</dbReference>
<dbReference type="PANTHER" id="PTHR43414:SF6">
    <property type="entry name" value="MULTIDRUG RESISTANCE PROTEIN MDTG"/>
    <property type="match status" value="1"/>
</dbReference>
<dbReference type="Pfam" id="PF07690">
    <property type="entry name" value="MFS_1"/>
    <property type="match status" value="1"/>
</dbReference>
<dbReference type="PRINTS" id="PR01035">
    <property type="entry name" value="TCRTETA"/>
</dbReference>
<dbReference type="SUPFAM" id="SSF103473">
    <property type="entry name" value="MFS general substrate transporter"/>
    <property type="match status" value="2"/>
</dbReference>
<dbReference type="PROSITE" id="PS50850">
    <property type="entry name" value="MFS"/>
    <property type="match status" value="1"/>
</dbReference>
<name>MDTG_ENTLS</name>
<evidence type="ECO:0000255" key="1">
    <source>
        <dbReference type="HAMAP-Rule" id="MF_01528"/>
    </source>
</evidence>
<reference key="1">
    <citation type="journal article" date="2011" name="Stand. Genomic Sci.">
        <title>Complete genome sequence of 'Enterobacter lignolyticus' SCF1.</title>
        <authorList>
            <person name="Deangelis K.M."/>
            <person name="D'Haeseleer P."/>
            <person name="Chivian D."/>
            <person name="Fortney J.L."/>
            <person name="Khudyakov J."/>
            <person name="Simmons B."/>
            <person name="Woo H."/>
            <person name="Arkin A.P."/>
            <person name="Davenport K.W."/>
            <person name="Goodwin L."/>
            <person name="Chen A."/>
            <person name="Ivanova N."/>
            <person name="Kyrpides N.C."/>
            <person name="Mavromatis K."/>
            <person name="Woyke T."/>
            <person name="Hazen T.C."/>
        </authorList>
    </citation>
    <scope>NUCLEOTIDE SEQUENCE [LARGE SCALE GENOMIC DNA]</scope>
    <source>
        <strain>SCF1</strain>
    </source>
</reference>
<proteinExistence type="inferred from homology"/>
<protein>
    <recommendedName>
        <fullName evidence="1">Multidrug resistance protein MdtG</fullName>
    </recommendedName>
</protein>
<sequence length="418" mass="44640">MYSSDAPINWKRNLTITWIGCFLTGAAFSLVMPFLPLYVESLGVTGHSALNMWSGLVFSITFLFSAIASPFWGGLADRKGRKIMLLRSALGMAIVMLLMGLAQNIWQFLILRALLGLLGGFIPNANALIATQIPRHKSGWALGTLSTGGVSGALLGPLVGGVLADSYGLRPVFFMTASVLFLCFLLTLLFIREQFQPVAKKEMLHAREVIASLKSPKLVLSLFVTTLIIQVATGSIAPILTLYVRDLAGNVANIAFISGMIASVPGVAALISAPRLGKLGDRIGPEKILIAALVISVLLLIPMSFVQTPWQLGLLRFLLGAADGALLPAVQTLLVYNATNQIAGRVFSYNQSFRDIGNVTGPLIGASVSANYGFRAVFLVTAMVVLFNAVYTGLSLRRTGATALPAQDVEKDDTSLVR</sequence>
<organism>
    <name type="scientific">Enterobacter lignolyticus (strain SCF1)</name>
    <dbReference type="NCBI Taxonomy" id="701347"/>
    <lineage>
        <taxon>Bacteria</taxon>
        <taxon>Pseudomonadati</taxon>
        <taxon>Pseudomonadota</taxon>
        <taxon>Gammaproteobacteria</taxon>
        <taxon>Enterobacterales</taxon>
        <taxon>Enterobacteriaceae</taxon>
        <taxon>Pluralibacter</taxon>
    </lineage>
</organism>